<reference key="1">
    <citation type="journal article" date="1996" name="J. Bacteriol.">
        <title>Isolation and characterization of a gene from Streptomyces sp. strain C5 that confers the ability to convert daunomycin to doxorubicin on Streptomyces lividans TK24.</title>
        <authorList>
            <person name="Dickens M.L."/>
            <person name="Strohl W.R."/>
        </authorList>
    </citation>
    <scope>NUCLEOTIDE SEQUENCE [GENOMIC DNA]</scope>
    <scope>FUNCTION</scope>
    <scope>CATALYTIC ACTIVITY</scope>
    <scope>SUBSTRATE SPECIFICITY</scope>
    <scope>NOMENCLATURE</scope>
    <source>
        <strain>C5</strain>
    </source>
</reference>
<reference key="2">
    <citation type="journal article" date="1997" name="J. Bacteriol.">
        <title>In vivo and in vitro bioconversion of epsilon-rhodomycinone glycoside to doxorubicin: functions of DauP, DauK, and DoxA.</title>
        <authorList>
            <person name="Dickens M.L."/>
            <person name="Priestley N.D."/>
            <person name="Strohl W.R."/>
        </authorList>
    </citation>
    <scope>FUNCTION</scope>
    <scope>CATALYTIC ACTIVITY</scope>
    <scope>SUBSTRATE SPECIFICITY</scope>
    <source>
        <strain>C5</strain>
    </source>
</reference>
<reference key="3">
    <citation type="journal article" date="1999" name="J. Bacteriol.">
        <title>Purification, properties, and characterization of recombinant Streptomyces sp. strain C5 DoxA, a cytochrome P-450 catalyzing multiple steps in doxorubicin biosynthesis.</title>
        <authorList>
            <person name="Walczak R.J."/>
            <person name="Dickens M.L."/>
            <person name="Priestley N.D."/>
            <person name="Strohl W.R."/>
        </authorList>
    </citation>
    <scope>FUNCTION</scope>
    <scope>CATALYTIC ACTIVITY</scope>
    <scope>BIOPHYSICOCHEMICAL PROPERTIES</scope>
    <scope>ACTIVITY REGULATION</scope>
    <scope>SUBSTRATE SPECIFICITY</scope>
    <scope>SUBUNIT</scope>
    <source>
        <strain>C5</strain>
    </source>
</reference>
<reference key="4">
    <citation type="journal article" date="2001" name="Org. Lett.">
        <title>Bioconversion of the anthracycline analogue desacetyladriamycin by recombinant DoxA, a P450-monooxygenase from Streptomyces sp. strain C5.</title>
        <authorList>
            <person name="Walczak R.J."/>
            <person name="Hines J.V."/>
            <person name="Strohl W.R."/>
            <person name="Priestley N.D."/>
        </authorList>
    </citation>
    <scope>FUNCTION</scope>
    <scope>CATALYTIC ACTIVITY</scope>
    <scope>SUBSTRATE SPECIFICITY</scope>
    <source>
        <strain>C5</strain>
    </source>
</reference>
<protein>
    <recommendedName>
        <fullName>Cytochrome P-450 monooxygenase DoxA</fullName>
        <ecNumber evidence="2 3 4 5">1.14.13.181</ecNumber>
    </recommendedName>
    <alternativeName>
        <fullName>13-deoxycarminomycin C-13 hydroxylase</fullName>
    </alternativeName>
    <alternativeName>
        <fullName>13-deoxydaunorubicin C-13 hydroxylase</fullName>
    </alternativeName>
    <alternativeName>
        <fullName>13-dihydrocarminomycin C-13 hydroxylase</fullName>
    </alternativeName>
    <alternativeName>
        <fullName>13-dihydrodaunorubicin C-13 hydroxylase</fullName>
    </alternativeName>
</protein>
<accession>Q59971</accession>
<name>DOXA_STRS5</name>
<evidence type="ECO:0000250" key="1"/>
<evidence type="ECO:0000269" key="2">
    <source>
    </source>
</evidence>
<evidence type="ECO:0000269" key="3">
    <source>
    </source>
</evidence>
<evidence type="ECO:0000269" key="4">
    <source>
    </source>
</evidence>
<evidence type="ECO:0000269" key="5">
    <source>
    </source>
</evidence>
<evidence type="ECO:0000305" key="6"/>
<evidence type="ECO:0000305" key="7">
    <source>
    </source>
</evidence>
<keyword id="KW-0045">Antibiotic biosynthesis</keyword>
<keyword id="KW-0963">Cytoplasm</keyword>
<keyword id="KW-0349">Heme</keyword>
<keyword id="KW-0408">Iron</keyword>
<keyword id="KW-0479">Metal-binding</keyword>
<keyword id="KW-0503">Monooxygenase</keyword>
<keyword id="KW-0521">NADP</keyword>
<keyword id="KW-0560">Oxidoreductase</keyword>
<comment type="function">
    <text evidence="2 3 4 5">Involved in the biosynthesis of the anthracyclines carminomycin and daunorubicin (daunomycin) which are aromatic polyketide antibiotics that exhibit high cytotoxicity and are widely applied in the chemotherapy of a variety of cancers. In vivo, DoxA catalyzes the C-13 hydroxylation of 13-deoxycarminomycin and 13-deoxydaunorubicin to yield 13-dihydrocarminomycin and 13-dihydrodaunorubicin, respectively, as well as the oxidation of these 13-dihydro-anthracyclines to their respective 13-keto forms, carminomycin and daunorubicin. In vitro, it also catalyzes the C-14 hydroxylation of daunorubicin to form doxorubicin (adriamycin), although this strain is not a doxorubicin producer. It is not able to accept anthracyclinones (aglycones) and anthracyclines with a 10-carbomethoxyl moiety. 13-oxidation of the anthracyclines possessing the 4-methoxy substitution is greatly favored. The anthracycline analog desacetyladriamycin can be oxidized to 10-hydroxydesacetyladriamycin. It can only use NADP. DoxA acts jointly with DauV.</text>
</comment>
<comment type="catalytic activity">
    <reaction evidence="2 3 4 5">
        <text>13-deoxydaunorubicin + NADPH + O2 + H(+) = 13-dihydrodaunorubicin + NADP(+) + H2O</text>
        <dbReference type="Rhea" id="RHEA:37851"/>
        <dbReference type="ChEBI" id="CHEBI:15377"/>
        <dbReference type="ChEBI" id="CHEBI:15378"/>
        <dbReference type="ChEBI" id="CHEBI:15379"/>
        <dbReference type="ChEBI" id="CHEBI:57783"/>
        <dbReference type="ChEBI" id="CHEBI:58349"/>
        <dbReference type="ChEBI" id="CHEBI:75296"/>
        <dbReference type="ChEBI" id="CHEBI:75297"/>
        <dbReference type="EC" id="1.14.13.181"/>
    </reaction>
</comment>
<comment type="catalytic activity">
    <reaction evidence="2 3 4 5">
        <text>13-dihydrodaunorubicin + NADPH + O2 + H(+) = daunorubicin + NADP(+) + 2 H2O</text>
        <dbReference type="Rhea" id="RHEA:37847"/>
        <dbReference type="ChEBI" id="CHEBI:15377"/>
        <dbReference type="ChEBI" id="CHEBI:15378"/>
        <dbReference type="ChEBI" id="CHEBI:15379"/>
        <dbReference type="ChEBI" id="CHEBI:57783"/>
        <dbReference type="ChEBI" id="CHEBI:58349"/>
        <dbReference type="ChEBI" id="CHEBI:64677"/>
        <dbReference type="ChEBI" id="CHEBI:75296"/>
        <dbReference type="EC" id="1.14.13.181"/>
    </reaction>
</comment>
<comment type="catalytic activity">
    <reaction evidence="2 3 4 5">
        <text>13-deoxycarminomycin + NADPH + O2 + H(+) = 13-dihydrocarminomycin + NADP(+) + H2O</text>
        <dbReference type="Rhea" id="RHEA:56360"/>
        <dbReference type="ChEBI" id="CHEBI:15377"/>
        <dbReference type="ChEBI" id="CHEBI:15378"/>
        <dbReference type="ChEBI" id="CHEBI:15379"/>
        <dbReference type="ChEBI" id="CHEBI:57783"/>
        <dbReference type="ChEBI" id="CHEBI:58349"/>
        <dbReference type="ChEBI" id="CHEBI:140329"/>
        <dbReference type="ChEBI" id="CHEBI:140330"/>
    </reaction>
</comment>
<comment type="catalytic activity">
    <reaction evidence="2 3 4 5">
        <text>13-dihydrocarminomycin + NADPH + O2 + H(+) = carminomycin + NADP(+) + 2 H2O</text>
        <dbReference type="Rhea" id="RHEA:56364"/>
        <dbReference type="ChEBI" id="CHEBI:15377"/>
        <dbReference type="ChEBI" id="CHEBI:15378"/>
        <dbReference type="ChEBI" id="CHEBI:15379"/>
        <dbReference type="ChEBI" id="CHEBI:57783"/>
        <dbReference type="ChEBI" id="CHEBI:58349"/>
        <dbReference type="ChEBI" id="CHEBI:75730"/>
        <dbReference type="ChEBI" id="CHEBI:140330"/>
    </reaction>
</comment>
<comment type="cofactor">
    <cofactor evidence="1">
        <name>heme</name>
        <dbReference type="ChEBI" id="CHEBI:30413"/>
    </cofactor>
</comment>
<comment type="activity regulation">
    <text evidence="5">Strongly inhibited by dithiothreitol and high ionic strength buffers.</text>
</comment>
<comment type="biophysicochemical properties">
    <kinetics>
        <KM evidence="5">0.9 uM for daunorubicin (at pH 7.5 and 30 degrees Celsius)</KM>
        <KM evidence="5">1.1 uM for 13-deoxydaunorubicin (at pH 7.5 and 30 degrees Celsius)</KM>
        <KM evidence="5">2.5 uM for 13-dihydrocarminomycin (at pH 7.5 and 30 degrees Celsius)</KM>
        <KM evidence="5">4.6 uM for 13-dihydrodaunorubicin (at pH 7.5 and 30 degrees Celsius)</KM>
        <Vmax evidence="5">7.5 pmol/min/mg enzyme with daunorubicin as substrate (at pH 7.5 and 30 degrees Celsius)</Vmax>
        <Vmax evidence="5">19.0 pmol/min/mg enzyme with 13-dihydrocarminomycin as substrate (at pH 7.5 and 30 degrees Celsius)</Vmax>
        <Vmax evidence="5">1600.0 pmol/min/mg enzyme with 13-deoxydaunorubicin as substrate (at pH 7.5 and 30 degrees Celsius)</Vmax>
        <Vmax evidence="5">3900.0 pmol/min/mg enzyme with 13-dihydrodaunorubicin as substrate (at pH 7.5 and 30 degrees Celsius)</Vmax>
        <text>kcat is 0.63 sec(-1) for oxidation on 13-dihydrodaunorubicin. kcat is 0.024 sec(-1) for hydroxylation on 13-deoxydaunorubicin. kcat is 0.00026 sec(-1) for oxidation on 13-dihydrocarminomycin. kcat is 0.00012 sec(-1) for hydroxylation on daunorubicin.</text>
    </kinetics>
    <phDependence>
        <text evidence="5">Optimum pH is 7.5. This optimal pH, slightly higher than normal physiological conditions, may be necessary to ensure that the proper ionic nature of the zwitterionic anthracycline substrates is maintained for optimal recognition.</text>
    </phDependence>
    <temperatureDependence>
        <text evidence="5">Optimum temperature is 30 degrees Celsius.</text>
    </temperatureDependence>
</comment>
<comment type="pathway">
    <text>Antibiotic biosynthesis; daunorubicin biosynthesis.</text>
</comment>
<comment type="pathway">
    <text>Antibiotic biosynthesis; carminomycin biosynthesis.</text>
</comment>
<comment type="subunit">
    <text evidence="5">Monomer.</text>
</comment>
<comment type="subcellular location">
    <subcellularLocation>
        <location evidence="1">Cytoplasm</location>
    </subcellularLocation>
</comment>
<comment type="miscellaneous">
    <text evidence="7">Streptomyces sp. C5 produces significant quantities of doxorubicin only when doxA is strongly overexpressed, but under normal conditions, 14-hydroxylation of daunorubicin cannot favorably compete with baumycin biosynthesis from daunorubicin. S.peucetius subsp. caesius ATCC 27952, a mutant strain derived from S.peucetius ATCC 29050, is the only organism reported to produce doxorubicin in vivo (PubMed:9864343).</text>
</comment>
<comment type="similarity">
    <text evidence="6">Belongs to the cytochrome P450 family.</text>
</comment>
<proteinExistence type="evidence at protein level"/>
<gene>
    <name type="primary">doxA</name>
</gene>
<dbReference type="EC" id="1.14.13.181" evidence="2 3 4 5"/>
<dbReference type="EMBL" id="U50973">
    <property type="protein sequence ID" value="AAB08049.1"/>
    <property type="molecule type" value="Genomic_DNA"/>
</dbReference>
<dbReference type="SMR" id="Q59971"/>
<dbReference type="KEGG" id="ag:AAB08049"/>
<dbReference type="BioCyc" id="MetaCyc:MONOMER-18172"/>
<dbReference type="BRENDA" id="1.14.13.181">
    <property type="organism ID" value="1284"/>
</dbReference>
<dbReference type="UniPathway" id="UPA00054"/>
<dbReference type="UniPathway" id="UPA01040"/>
<dbReference type="GO" id="GO:0005737">
    <property type="term" value="C:cytoplasm"/>
    <property type="evidence" value="ECO:0007669"/>
    <property type="project" value="UniProtKB-SubCell"/>
</dbReference>
<dbReference type="GO" id="GO:0020037">
    <property type="term" value="F:heme binding"/>
    <property type="evidence" value="ECO:0007669"/>
    <property type="project" value="InterPro"/>
</dbReference>
<dbReference type="GO" id="GO:0005506">
    <property type="term" value="F:iron ion binding"/>
    <property type="evidence" value="ECO:0007669"/>
    <property type="project" value="InterPro"/>
</dbReference>
<dbReference type="GO" id="GO:0016709">
    <property type="term" value="F:oxidoreductase activity, acting on paired donors, with incorporation or reduction of molecular oxygen, NAD(P)H as one donor, and incorporation of one atom of oxygen"/>
    <property type="evidence" value="ECO:0000314"/>
    <property type="project" value="UniProtKB"/>
</dbReference>
<dbReference type="GO" id="GO:1901771">
    <property type="term" value="P:daunorubicin biosynthetic process"/>
    <property type="evidence" value="ECO:0000314"/>
    <property type="project" value="UniProtKB"/>
</dbReference>
<dbReference type="FunFam" id="1.10.630.10:FF:000226">
    <property type="entry name" value="Cytochrome P-450 monooxygenase DoxA"/>
    <property type="match status" value="1"/>
</dbReference>
<dbReference type="Gene3D" id="1.10.630.10">
    <property type="entry name" value="Cytochrome P450"/>
    <property type="match status" value="1"/>
</dbReference>
<dbReference type="InterPro" id="IPR001128">
    <property type="entry name" value="Cyt_P450"/>
</dbReference>
<dbReference type="InterPro" id="IPR002397">
    <property type="entry name" value="Cyt_P450_B"/>
</dbReference>
<dbReference type="InterPro" id="IPR017972">
    <property type="entry name" value="Cyt_P450_CS"/>
</dbReference>
<dbReference type="InterPro" id="IPR036396">
    <property type="entry name" value="Cyt_P450_sf"/>
</dbReference>
<dbReference type="PANTHER" id="PTHR46696:SF1">
    <property type="entry name" value="CYTOCHROME P450 YJIB-RELATED"/>
    <property type="match status" value="1"/>
</dbReference>
<dbReference type="PANTHER" id="PTHR46696">
    <property type="entry name" value="P450, PUTATIVE (EUROFUNG)-RELATED"/>
    <property type="match status" value="1"/>
</dbReference>
<dbReference type="Pfam" id="PF00067">
    <property type="entry name" value="p450"/>
    <property type="match status" value="1"/>
</dbReference>
<dbReference type="PRINTS" id="PR00359">
    <property type="entry name" value="BP450"/>
</dbReference>
<dbReference type="PRINTS" id="PR00385">
    <property type="entry name" value="P450"/>
</dbReference>
<dbReference type="SUPFAM" id="SSF48264">
    <property type="entry name" value="Cytochrome P450"/>
    <property type="match status" value="1"/>
</dbReference>
<dbReference type="PROSITE" id="PS00086">
    <property type="entry name" value="CYTOCHROME_P450"/>
    <property type="match status" value="1"/>
</dbReference>
<sequence>MSGEAPRVAVDPFSCPMMTMQRKPEVHDAFREAGPVVEVNAPAGGPAWVITDDALAREVLADPRFVKDPDLAPTAWRGVDDGLDIPVPELRPFTLIAVDGEDHRRLRRIHAPAFNPRRLAERTDRIAAIADRLLTELADSSDRSGEPAELIGGFAYHFPLLVICELLGVPVTDPAMAREAVGVLKALGLGGPQSAGGDGTDPAGDVPDTSALESLLLEAVHAARRKDTRTMTRVLYERAQAEFGSVSDDQLVYMITGLIFAGHDTTGSFLGFLLAEVLAGRLAADADGDAISRFVEEALRHHPPVPYTLWRFAATEVVIRGVRLPRGAPVLVDIEGTNTDGRHHDAPHAFHPDRPSRRRLTFGDGPHYCIGEQLAQLESRTMIGVLRSRFPQARLAVPYEELRWCRKGAQTARLTDLPVWLR</sequence>
<feature type="chain" id="PRO_0000425683" description="Cytochrome P-450 monooxygenase DoxA">
    <location>
        <begin position="1"/>
        <end position="422"/>
    </location>
</feature>
<feature type="binding site" description="axial binding residue" evidence="1">
    <location>
        <position position="369"/>
    </location>
    <ligand>
        <name>heme</name>
        <dbReference type="ChEBI" id="CHEBI:30413"/>
    </ligand>
    <ligandPart>
        <name>Fe</name>
        <dbReference type="ChEBI" id="CHEBI:18248"/>
    </ligandPart>
</feature>
<organism>
    <name type="scientific">Streptomyces sp. (strain C5)</name>
    <dbReference type="NCBI Taxonomy" id="45212"/>
    <lineage>
        <taxon>Bacteria</taxon>
        <taxon>Bacillati</taxon>
        <taxon>Actinomycetota</taxon>
        <taxon>Actinomycetes</taxon>
        <taxon>Kitasatosporales</taxon>
        <taxon>Streptomycetaceae</taxon>
        <taxon>Streptomyces</taxon>
    </lineage>
</organism>